<name>TR112_CAEEL</name>
<protein>
    <recommendedName>
        <fullName>Multifunctional methyltransferase subunit TRM112-like protein</fullName>
    </recommendedName>
    <alternativeName>
        <fullName>tRNA methyltransferase 112 homolog</fullName>
    </alternativeName>
</protein>
<gene>
    <name type="ORF">C04H5.1</name>
</gene>
<sequence length="125" mass="14572">MKLFVHNFMSSRFLKNVTVGYPLNLVVKQFVEKDIEFDRDNTIVMLDRIQYEALIVAAAAVNQSDRIPREKPEKWDELTDEQLRVFHHLLMNIDVIDGELICPETKTVFPIRDGIPNMLKVDAEK</sequence>
<proteinExistence type="inferred from homology"/>
<comment type="function">
    <text evidence="1">Acts as an activator of both RNA and protein methyltransferases.</text>
</comment>
<comment type="subcellular location">
    <subcellularLocation>
        <location evidence="1">Nucleus</location>
        <location evidence="1">Nucleoplasm</location>
    </subcellularLocation>
    <subcellularLocation>
        <location evidence="1">Cytoplasm</location>
        <location evidence="1">Perinuclear region</location>
    </subcellularLocation>
</comment>
<comment type="similarity">
    <text evidence="2">Belongs to the TRM112 family.</text>
</comment>
<keyword id="KW-0963">Cytoplasm</keyword>
<keyword id="KW-0539">Nucleus</keyword>
<keyword id="KW-1185">Reference proteome</keyword>
<accession>O45241</accession>
<dbReference type="EMBL" id="Z81462">
    <property type="protein sequence ID" value="CAB03840.1"/>
    <property type="molecule type" value="Genomic_DNA"/>
</dbReference>
<dbReference type="PIR" id="T18929">
    <property type="entry name" value="T18929"/>
</dbReference>
<dbReference type="RefSeq" id="NP_001379201.1">
    <property type="nucleotide sequence ID" value="NM_001393237.1"/>
</dbReference>
<dbReference type="RefSeq" id="NP_497021.1">
    <property type="nucleotide sequence ID" value="NM_064620.1"/>
</dbReference>
<dbReference type="SMR" id="O45241"/>
<dbReference type="BioGRID" id="47099">
    <property type="interactions" value="4"/>
</dbReference>
<dbReference type="DIP" id="DIP-26016N"/>
<dbReference type="FunCoup" id="O45241">
    <property type="interactions" value="2296"/>
</dbReference>
<dbReference type="STRING" id="6239.C04H5.1.1"/>
<dbReference type="PaxDb" id="6239-C04H5.1"/>
<dbReference type="PeptideAtlas" id="O45241"/>
<dbReference type="EnsemblMetazoa" id="C04H5.1.1">
    <property type="protein sequence ID" value="C04H5.1.1"/>
    <property type="gene ID" value="WBGene00007312"/>
</dbReference>
<dbReference type="GeneID" id="182240"/>
<dbReference type="UCSC" id="C04H5.1">
    <property type="organism name" value="c. elegans"/>
</dbReference>
<dbReference type="AGR" id="WB:WBGene00007312"/>
<dbReference type="WormBase" id="C04H5.1">
    <property type="protein sequence ID" value="CE15587"/>
    <property type="gene ID" value="WBGene00007312"/>
</dbReference>
<dbReference type="eggNOG" id="KOG1088">
    <property type="taxonomic scope" value="Eukaryota"/>
</dbReference>
<dbReference type="GeneTree" id="ENSGT00940000164608"/>
<dbReference type="HOGENOM" id="CLU_086140_2_0_1"/>
<dbReference type="InParanoid" id="O45241"/>
<dbReference type="OMA" id="NMLTSKC"/>
<dbReference type="OrthoDB" id="2187549at2759"/>
<dbReference type="PhylomeDB" id="O45241"/>
<dbReference type="Reactome" id="R-CEL-156581">
    <property type="pathway name" value="Methylation"/>
</dbReference>
<dbReference type="Reactome" id="R-CEL-72764">
    <property type="pathway name" value="Eukaryotic Translation Termination"/>
</dbReference>
<dbReference type="PRO" id="PR:O45241"/>
<dbReference type="Proteomes" id="UP000001940">
    <property type="component" value="Chromosome II"/>
</dbReference>
<dbReference type="Bgee" id="WBGene00007312">
    <property type="expression patterns" value="Expressed in pharyngeal muscle cell (C elegans) and 3 other cell types or tissues"/>
</dbReference>
<dbReference type="GO" id="GO:0005737">
    <property type="term" value="C:cytoplasm"/>
    <property type="evidence" value="ECO:0000318"/>
    <property type="project" value="GO_Central"/>
</dbReference>
<dbReference type="GO" id="GO:0005654">
    <property type="term" value="C:nucleoplasm"/>
    <property type="evidence" value="ECO:0007669"/>
    <property type="project" value="UniProtKB-SubCell"/>
</dbReference>
<dbReference type="GO" id="GO:0005634">
    <property type="term" value="C:nucleus"/>
    <property type="evidence" value="ECO:0000318"/>
    <property type="project" value="GO_Central"/>
</dbReference>
<dbReference type="GO" id="GO:0048471">
    <property type="term" value="C:perinuclear region of cytoplasm"/>
    <property type="evidence" value="ECO:0007669"/>
    <property type="project" value="UniProtKB-SubCell"/>
</dbReference>
<dbReference type="GO" id="GO:0043528">
    <property type="term" value="C:tRNA (m2G10) methyltransferase complex"/>
    <property type="evidence" value="ECO:0000318"/>
    <property type="project" value="GO_Central"/>
</dbReference>
<dbReference type="GO" id="GO:0046982">
    <property type="term" value="F:protein heterodimerization activity"/>
    <property type="evidence" value="ECO:0007669"/>
    <property type="project" value="InterPro"/>
</dbReference>
<dbReference type="GO" id="GO:0141106">
    <property type="term" value="F:tRNA methyltransferase activator activity"/>
    <property type="evidence" value="ECO:0000318"/>
    <property type="project" value="GO_Central"/>
</dbReference>
<dbReference type="GO" id="GO:0000470">
    <property type="term" value="P:maturation of LSU-rRNA"/>
    <property type="evidence" value="ECO:0000318"/>
    <property type="project" value="GO_Central"/>
</dbReference>
<dbReference type="GO" id="GO:0030490">
    <property type="term" value="P:maturation of SSU-rRNA"/>
    <property type="evidence" value="ECO:0000318"/>
    <property type="project" value="GO_Central"/>
</dbReference>
<dbReference type="GO" id="GO:2000234">
    <property type="term" value="P:positive regulation of rRNA processing"/>
    <property type="evidence" value="ECO:0000318"/>
    <property type="project" value="GO_Central"/>
</dbReference>
<dbReference type="CDD" id="cd21089">
    <property type="entry name" value="Trm112-like"/>
    <property type="match status" value="1"/>
</dbReference>
<dbReference type="FunFam" id="2.20.25.10:FF:000056">
    <property type="entry name" value="Multifunctional methyltransferase subunit TRM112-like protein"/>
    <property type="match status" value="1"/>
</dbReference>
<dbReference type="Gene3D" id="2.20.25.10">
    <property type="match status" value="1"/>
</dbReference>
<dbReference type="InterPro" id="IPR039127">
    <property type="entry name" value="Trm112"/>
</dbReference>
<dbReference type="InterPro" id="IPR005651">
    <property type="entry name" value="Trm112-like"/>
</dbReference>
<dbReference type="PANTHER" id="PTHR12773:SF0">
    <property type="entry name" value="MULTIFUNCTIONAL METHYLTRANSFERASE SUBUNIT TRM112-LIKE PROTEIN"/>
    <property type="match status" value="1"/>
</dbReference>
<dbReference type="PANTHER" id="PTHR12773">
    <property type="entry name" value="UPF0315 PROTEIN-RELATED"/>
    <property type="match status" value="1"/>
</dbReference>
<dbReference type="Pfam" id="PF03966">
    <property type="entry name" value="Trm112p"/>
    <property type="match status" value="1"/>
</dbReference>
<dbReference type="SUPFAM" id="SSF158997">
    <property type="entry name" value="Trm112p-like"/>
    <property type="match status" value="1"/>
</dbReference>
<feature type="chain" id="PRO_0000215799" description="Multifunctional methyltransferase subunit TRM112-like protein">
    <location>
        <begin position="1"/>
        <end position="125"/>
    </location>
</feature>
<feature type="domain" description="TRM112">
    <location>
        <begin position="2"/>
        <end position="121"/>
    </location>
</feature>
<organism>
    <name type="scientific">Caenorhabditis elegans</name>
    <dbReference type="NCBI Taxonomy" id="6239"/>
    <lineage>
        <taxon>Eukaryota</taxon>
        <taxon>Metazoa</taxon>
        <taxon>Ecdysozoa</taxon>
        <taxon>Nematoda</taxon>
        <taxon>Chromadorea</taxon>
        <taxon>Rhabditida</taxon>
        <taxon>Rhabditina</taxon>
        <taxon>Rhabditomorpha</taxon>
        <taxon>Rhabditoidea</taxon>
        <taxon>Rhabditidae</taxon>
        <taxon>Peloderinae</taxon>
        <taxon>Caenorhabditis</taxon>
    </lineage>
</organism>
<reference key="1">
    <citation type="journal article" date="1998" name="Science">
        <title>Genome sequence of the nematode C. elegans: a platform for investigating biology.</title>
        <authorList>
            <consortium name="The C. elegans sequencing consortium"/>
        </authorList>
    </citation>
    <scope>NUCLEOTIDE SEQUENCE [LARGE SCALE GENOMIC DNA]</scope>
    <source>
        <strain>Bristol N2</strain>
    </source>
</reference>
<evidence type="ECO:0000250" key="1">
    <source>
        <dbReference type="UniProtKB" id="Q9UI30"/>
    </source>
</evidence>
<evidence type="ECO:0000305" key="2"/>